<accession>B9DV79</accession>
<proteinExistence type="inferred from homology"/>
<name>PROA_STRU0</name>
<sequence>MTIIEELGKKAKQASYDLLGLSTIEKNQMLTQLAKDLIEKSDFIIDENQKDLQKAEENGISEVMVDRLKLTAERIKGISEGVLQVAELEDPIGQVIKGYTNLDGLKIVQKRVPLGVIAMIFESRPNVSVDAFSLAFKTNNAIILRGGRDALHSNMALVQVIRETLIRLGHNPDAVQLLEDPSHDLAEALMSATEYVDVLIPRGGAKLIQTVKEKAKVPVIETGVGNVHIYVDATADLEMAKSIVINAKTQRPSVCNAAESLIIHEEVAENFIPLLEDAIEAVHKVEFRVDDKGYSLFKHAVKATENDYATEFLDYILSVKIVSSLDEAISWINRYTSHHSEAIVTRDIQAAERFQEEIDAAAVYVNASTRFTDGFVFGLGAEIGISTQKMHARGPMGLEALTSSKYYINGNGQIRE</sequence>
<dbReference type="EC" id="1.2.1.41" evidence="1"/>
<dbReference type="EMBL" id="AM946015">
    <property type="protein sequence ID" value="CAR43082.1"/>
    <property type="molecule type" value="Genomic_DNA"/>
</dbReference>
<dbReference type="RefSeq" id="WP_015911742.1">
    <property type="nucleotide sequence ID" value="NC_012004.1"/>
</dbReference>
<dbReference type="SMR" id="B9DV79"/>
<dbReference type="STRING" id="218495.SUB1422"/>
<dbReference type="KEGG" id="sub:SUB1422"/>
<dbReference type="eggNOG" id="COG0014">
    <property type="taxonomic scope" value="Bacteria"/>
</dbReference>
<dbReference type="HOGENOM" id="CLU_030231_0_0_9"/>
<dbReference type="OrthoDB" id="9809970at2"/>
<dbReference type="UniPathway" id="UPA00098">
    <property type="reaction ID" value="UER00360"/>
</dbReference>
<dbReference type="Proteomes" id="UP000000449">
    <property type="component" value="Chromosome"/>
</dbReference>
<dbReference type="GO" id="GO:0005737">
    <property type="term" value="C:cytoplasm"/>
    <property type="evidence" value="ECO:0007669"/>
    <property type="project" value="UniProtKB-SubCell"/>
</dbReference>
<dbReference type="GO" id="GO:0004350">
    <property type="term" value="F:glutamate-5-semialdehyde dehydrogenase activity"/>
    <property type="evidence" value="ECO:0007669"/>
    <property type="project" value="UniProtKB-UniRule"/>
</dbReference>
<dbReference type="GO" id="GO:0050661">
    <property type="term" value="F:NADP binding"/>
    <property type="evidence" value="ECO:0007669"/>
    <property type="project" value="InterPro"/>
</dbReference>
<dbReference type="GO" id="GO:0055129">
    <property type="term" value="P:L-proline biosynthetic process"/>
    <property type="evidence" value="ECO:0007669"/>
    <property type="project" value="UniProtKB-UniRule"/>
</dbReference>
<dbReference type="CDD" id="cd07079">
    <property type="entry name" value="ALDH_F18-19_ProA-GPR"/>
    <property type="match status" value="1"/>
</dbReference>
<dbReference type="FunFam" id="3.40.309.10:FF:000006">
    <property type="entry name" value="Gamma-glutamyl phosphate reductase"/>
    <property type="match status" value="1"/>
</dbReference>
<dbReference type="Gene3D" id="3.40.605.10">
    <property type="entry name" value="Aldehyde Dehydrogenase, Chain A, domain 1"/>
    <property type="match status" value="1"/>
</dbReference>
<dbReference type="Gene3D" id="3.40.309.10">
    <property type="entry name" value="Aldehyde Dehydrogenase, Chain A, domain 2"/>
    <property type="match status" value="1"/>
</dbReference>
<dbReference type="HAMAP" id="MF_00412">
    <property type="entry name" value="ProA"/>
    <property type="match status" value="1"/>
</dbReference>
<dbReference type="InterPro" id="IPR016161">
    <property type="entry name" value="Ald_DH/histidinol_DH"/>
</dbReference>
<dbReference type="InterPro" id="IPR016163">
    <property type="entry name" value="Ald_DH_C"/>
</dbReference>
<dbReference type="InterPro" id="IPR016162">
    <property type="entry name" value="Ald_DH_N"/>
</dbReference>
<dbReference type="InterPro" id="IPR015590">
    <property type="entry name" value="Aldehyde_DH_dom"/>
</dbReference>
<dbReference type="InterPro" id="IPR020593">
    <property type="entry name" value="G-glutamylP_reductase_CS"/>
</dbReference>
<dbReference type="InterPro" id="IPR012134">
    <property type="entry name" value="Glu-5-SA_DH"/>
</dbReference>
<dbReference type="InterPro" id="IPR000965">
    <property type="entry name" value="GPR_dom"/>
</dbReference>
<dbReference type="NCBIfam" id="NF001221">
    <property type="entry name" value="PRK00197.1"/>
    <property type="match status" value="1"/>
</dbReference>
<dbReference type="NCBIfam" id="TIGR00407">
    <property type="entry name" value="proA"/>
    <property type="match status" value="1"/>
</dbReference>
<dbReference type="PANTHER" id="PTHR11063:SF8">
    <property type="entry name" value="DELTA-1-PYRROLINE-5-CARBOXYLATE SYNTHASE"/>
    <property type="match status" value="1"/>
</dbReference>
<dbReference type="PANTHER" id="PTHR11063">
    <property type="entry name" value="GLUTAMATE SEMIALDEHYDE DEHYDROGENASE"/>
    <property type="match status" value="1"/>
</dbReference>
<dbReference type="Pfam" id="PF00171">
    <property type="entry name" value="Aldedh"/>
    <property type="match status" value="2"/>
</dbReference>
<dbReference type="PIRSF" id="PIRSF000151">
    <property type="entry name" value="GPR"/>
    <property type="match status" value="1"/>
</dbReference>
<dbReference type="SUPFAM" id="SSF53720">
    <property type="entry name" value="ALDH-like"/>
    <property type="match status" value="1"/>
</dbReference>
<dbReference type="PROSITE" id="PS01223">
    <property type="entry name" value="PROA"/>
    <property type="match status" value="1"/>
</dbReference>
<comment type="function">
    <text evidence="1">Catalyzes the NADPH-dependent reduction of L-glutamate 5-phosphate into L-glutamate 5-semialdehyde and phosphate. The product spontaneously undergoes cyclization to form 1-pyrroline-5-carboxylate.</text>
</comment>
<comment type="catalytic activity">
    <reaction evidence="1">
        <text>L-glutamate 5-semialdehyde + phosphate + NADP(+) = L-glutamyl 5-phosphate + NADPH + H(+)</text>
        <dbReference type="Rhea" id="RHEA:19541"/>
        <dbReference type="ChEBI" id="CHEBI:15378"/>
        <dbReference type="ChEBI" id="CHEBI:43474"/>
        <dbReference type="ChEBI" id="CHEBI:57783"/>
        <dbReference type="ChEBI" id="CHEBI:58066"/>
        <dbReference type="ChEBI" id="CHEBI:58274"/>
        <dbReference type="ChEBI" id="CHEBI:58349"/>
        <dbReference type="EC" id="1.2.1.41"/>
    </reaction>
</comment>
<comment type="pathway">
    <text evidence="1">Amino-acid biosynthesis; L-proline biosynthesis; L-glutamate 5-semialdehyde from L-glutamate: step 2/2.</text>
</comment>
<comment type="subcellular location">
    <subcellularLocation>
        <location evidence="1">Cytoplasm</location>
    </subcellularLocation>
</comment>
<comment type="similarity">
    <text evidence="1">Belongs to the gamma-glutamyl phosphate reductase family.</text>
</comment>
<keyword id="KW-0028">Amino-acid biosynthesis</keyword>
<keyword id="KW-0963">Cytoplasm</keyword>
<keyword id="KW-0521">NADP</keyword>
<keyword id="KW-0560">Oxidoreductase</keyword>
<keyword id="KW-0641">Proline biosynthesis</keyword>
<keyword id="KW-1185">Reference proteome</keyword>
<evidence type="ECO:0000255" key="1">
    <source>
        <dbReference type="HAMAP-Rule" id="MF_00412"/>
    </source>
</evidence>
<reference key="1">
    <citation type="journal article" date="2009" name="BMC Genomics">
        <title>Evidence for niche adaptation in the genome of the bovine pathogen Streptococcus uberis.</title>
        <authorList>
            <person name="Ward P.N."/>
            <person name="Holden M.T.G."/>
            <person name="Leigh J.A."/>
            <person name="Lennard N."/>
            <person name="Bignell A."/>
            <person name="Barron A."/>
            <person name="Clark L."/>
            <person name="Quail M.A."/>
            <person name="Woodward J."/>
            <person name="Barrell B.G."/>
            <person name="Egan S.A."/>
            <person name="Field T.R."/>
            <person name="Maskell D."/>
            <person name="Kehoe M."/>
            <person name="Dowson C.G."/>
            <person name="Chanter N."/>
            <person name="Whatmore A.M."/>
            <person name="Bentley S.D."/>
            <person name="Parkhill J."/>
        </authorList>
    </citation>
    <scope>NUCLEOTIDE SEQUENCE [LARGE SCALE GENOMIC DNA]</scope>
    <source>
        <strain>ATCC BAA-854 / 0140J</strain>
    </source>
</reference>
<gene>
    <name evidence="1" type="primary">proA</name>
    <name type="ordered locus">SUB1422</name>
</gene>
<protein>
    <recommendedName>
        <fullName evidence="1">Gamma-glutamyl phosphate reductase</fullName>
        <shortName evidence="1">GPR</shortName>
        <ecNumber evidence="1">1.2.1.41</ecNumber>
    </recommendedName>
    <alternativeName>
        <fullName evidence="1">Glutamate-5-semialdehyde dehydrogenase</fullName>
    </alternativeName>
    <alternativeName>
        <fullName evidence="1">Glutamyl-gamma-semialdehyde dehydrogenase</fullName>
        <shortName evidence="1">GSA dehydrogenase</shortName>
    </alternativeName>
</protein>
<organism>
    <name type="scientific">Streptococcus uberis (strain ATCC BAA-854 / 0140J)</name>
    <dbReference type="NCBI Taxonomy" id="218495"/>
    <lineage>
        <taxon>Bacteria</taxon>
        <taxon>Bacillati</taxon>
        <taxon>Bacillota</taxon>
        <taxon>Bacilli</taxon>
        <taxon>Lactobacillales</taxon>
        <taxon>Streptococcaceae</taxon>
        <taxon>Streptococcus</taxon>
    </lineage>
</organism>
<feature type="chain" id="PRO_1000193665" description="Gamma-glutamyl phosphate reductase">
    <location>
        <begin position="1"/>
        <end position="416"/>
    </location>
</feature>